<evidence type="ECO:0000255" key="1">
    <source>
        <dbReference type="HAMAP-Rule" id="MF_00440"/>
    </source>
</evidence>
<organism>
    <name type="scientific">Brucella abortus (strain 2308)</name>
    <dbReference type="NCBI Taxonomy" id="359391"/>
    <lineage>
        <taxon>Bacteria</taxon>
        <taxon>Pseudomonadati</taxon>
        <taxon>Pseudomonadota</taxon>
        <taxon>Alphaproteobacteria</taxon>
        <taxon>Hyphomicrobiales</taxon>
        <taxon>Brucellaceae</taxon>
        <taxon>Brucella/Ochrobactrum group</taxon>
        <taxon>Brucella</taxon>
    </lineage>
</organism>
<name>NRDR_BRUA2</name>
<feature type="chain" id="PRO_0000230857" description="Transcriptional repressor NrdR">
    <location>
        <begin position="1"/>
        <end position="158"/>
    </location>
</feature>
<feature type="domain" description="ATP-cone" evidence="1">
    <location>
        <begin position="49"/>
        <end position="139"/>
    </location>
</feature>
<feature type="zinc finger region" evidence="1">
    <location>
        <begin position="3"/>
        <end position="34"/>
    </location>
</feature>
<accession>Q2YN94</accession>
<keyword id="KW-0067">ATP-binding</keyword>
<keyword id="KW-0238">DNA-binding</keyword>
<keyword id="KW-0479">Metal-binding</keyword>
<keyword id="KW-0547">Nucleotide-binding</keyword>
<keyword id="KW-1185">Reference proteome</keyword>
<keyword id="KW-0678">Repressor</keyword>
<keyword id="KW-0804">Transcription</keyword>
<keyword id="KW-0805">Transcription regulation</keyword>
<keyword id="KW-0862">Zinc</keyword>
<keyword id="KW-0863">Zinc-finger</keyword>
<proteinExistence type="inferred from homology"/>
<protein>
    <recommendedName>
        <fullName evidence="1">Transcriptional repressor NrdR</fullName>
    </recommendedName>
</protein>
<sequence length="158" mass="17933">MRCPYCQSEDTQVKDSRPAEDGAVIRRRRVCSVCGGRFTTFERVQLRDLMVVKKSGRRVPFDRDKLTRSIEVALRKRDVDSERVERAISGIVRQLESAGEAEVTSDEIGRLAMDALKGIDDIAYIRFASVYRNFSKAVDFHNVIDELTVSETGDNLET</sequence>
<gene>
    <name evidence="1" type="primary">nrdR</name>
    <name type="ordered locus">BAB1_0788</name>
</gene>
<comment type="function">
    <text evidence="1">Negatively regulates transcription of bacterial ribonucleotide reductase nrd genes and operons by binding to NrdR-boxes.</text>
</comment>
<comment type="cofactor">
    <cofactor evidence="1">
        <name>Zn(2+)</name>
        <dbReference type="ChEBI" id="CHEBI:29105"/>
    </cofactor>
    <text evidence="1">Binds 1 zinc ion.</text>
</comment>
<comment type="similarity">
    <text evidence="1">Belongs to the NrdR family.</text>
</comment>
<dbReference type="EMBL" id="AM040264">
    <property type="protein sequence ID" value="CAJ10744.1"/>
    <property type="molecule type" value="Genomic_DNA"/>
</dbReference>
<dbReference type="RefSeq" id="WP_002966765.1">
    <property type="nucleotide sequence ID" value="NZ_KN046823.1"/>
</dbReference>
<dbReference type="SMR" id="Q2YN94"/>
<dbReference type="STRING" id="359391.BAB1_0788"/>
<dbReference type="GeneID" id="93016844"/>
<dbReference type="KEGG" id="bmf:BAB1_0788"/>
<dbReference type="PATRIC" id="fig|359391.11.peg.3099"/>
<dbReference type="HOGENOM" id="CLU_108412_0_1_5"/>
<dbReference type="Proteomes" id="UP000002719">
    <property type="component" value="Chromosome I"/>
</dbReference>
<dbReference type="GO" id="GO:0005524">
    <property type="term" value="F:ATP binding"/>
    <property type="evidence" value="ECO:0007669"/>
    <property type="project" value="UniProtKB-KW"/>
</dbReference>
<dbReference type="GO" id="GO:0003677">
    <property type="term" value="F:DNA binding"/>
    <property type="evidence" value="ECO:0007669"/>
    <property type="project" value="UniProtKB-KW"/>
</dbReference>
<dbReference type="GO" id="GO:0008270">
    <property type="term" value="F:zinc ion binding"/>
    <property type="evidence" value="ECO:0007669"/>
    <property type="project" value="UniProtKB-UniRule"/>
</dbReference>
<dbReference type="GO" id="GO:0045892">
    <property type="term" value="P:negative regulation of DNA-templated transcription"/>
    <property type="evidence" value="ECO:0007669"/>
    <property type="project" value="UniProtKB-UniRule"/>
</dbReference>
<dbReference type="HAMAP" id="MF_00440">
    <property type="entry name" value="NrdR"/>
    <property type="match status" value="1"/>
</dbReference>
<dbReference type="InterPro" id="IPR005144">
    <property type="entry name" value="ATP-cone_dom"/>
</dbReference>
<dbReference type="InterPro" id="IPR055173">
    <property type="entry name" value="NrdR-like_N"/>
</dbReference>
<dbReference type="InterPro" id="IPR003796">
    <property type="entry name" value="RNR_NrdR-like"/>
</dbReference>
<dbReference type="NCBIfam" id="TIGR00244">
    <property type="entry name" value="transcriptional regulator NrdR"/>
    <property type="match status" value="1"/>
</dbReference>
<dbReference type="PANTHER" id="PTHR30455">
    <property type="entry name" value="TRANSCRIPTIONAL REPRESSOR NRDR"/>
    <property type="match status" value="1"/>
</dbReference>
<dbReference type="PANTHER" id="PTHR30455:SF2">
    <property type="entry name" value="TRANSCRIPTIONAL REPRESSOR NRDR"/>
    <property type="match status" value="1"/>
</dbReference>
<dbReference type="Pfam" id="PF03477">
    <property type="entry name" value="ATP-cone"/>
    <property type="match status" value="1"/>
</dbReference>
<dbReference type="Pfam" id="PF22811">
    <property type="entry name" value="Zn_ribbon_NrdR"/>
    <property type="match status" value="1"/>
</dbReference>
<dbReference type="PROSITE" id="PS51161">
    <property type="entry name" value="ATP_CONE"/>
    <property type="match status" value="1"/>
</dbReference>
<reference key="1">
    <citation type="journal article" date="2005" name="Infect. Immun.">
        <title>Whole-genome analyses of speciation events in pathogenic Brucellae.</title>
        <authorList>
            <person name="Chain P.S."/>
            <person name="Comerci D.J."/>
            <person name="Tolmasky M.E."/>
            <person name="Larimer F.W."/>
            <person name="Malfatti S.A."/>
            <person name="Vergez L.M."/>
            <person name="Aguero F."/>
            <person name="Land M.L."/>
            <person name="Ugalde R.A."/>
            <person name="Garcia E."/>
        </authorList>
    </citation>
    <scope>NUCLEOTIDE SEQUENCE [LARGE SCALE GENOMIC DNA]</scope>
    <source>
        <strain>2308</strain>
    </source>
</reference>